<keyword id="KW-0175">Coiled coil</keyword>
<keyword id="KW-0963">Cytoplasm</keyword>
<keyword id="KW-0206">Cytoskeleton</keyword>
<keyword id="KW-1185">Reference proteome</keyword>
<name>POB15_CHLRE</name>
<reference key="1">
    <citation type="journal article" date="2007" name="Science">
        <title>The Chlamydomonas genome reveals the evolution of key animal and plant functions.</title>
        <authorList>
            <person name="Merchant S.S."/>
            <person name="Prochnik S.E."/>
            <person name="Vallon O."/>
            <person name="Harris E.H."/>
            <person name="Karpowicz S.J."/>
            <person name="Witman G.B."/>
            <person name="Terry A."/>
            <person name="Salamov A."/>
            <person name="Fritz-Laylin L.K."/>
            <person name="Marechal-Drouard L."/>
            <person name="Marshall W.F."/>
            <person name="Qu L.H."/>
            <person name="Nelson D.R."/>
            <person name="Sanderfoot A.A."/>
            <person name="Spalding M.H."/>
            <person name="Kapitonov V.V."/>
            <person name="Ren Q."/>
            <person name="Ferris P."/>
            <person name="Lindquist E."/>
            <person name="Shapiro H."/>
            <person name="Lucas S.M."/>
            <person name="Grimwood J."/>
            <person name="Schmutz J."/>
            <person name="Cardol P."/>
            <person name="Cerutti H."/>
            <person name="Chanfreau G."/>
            <person name="Chen C.L."/>
            <person name="Cognat V."/>
            <person name="Croft M.T."/>
            <person name="Dent R."/>
            <person name="Dutcher S."/>
            <person name="Fernandez E."/>
            <person name="Fukuzawa H."/>
            <person name="Gonzalez-Ballester D."/>
            <person name="Gonzalez-Halphen D."/>
            <person name="Hallmann A."/>
            <person name="Hanikenne M."/>
            <person name="Hippler M."/>
            <person name="Inwood W."/>
            <person name="Jabbari K."/>
            <person name="Kalanon M."/>
            <person name="Kuras R."/>
            <person name="Lefebvre P.A."/>
            <person name="Lemaire S.D."/>
            <person name="Lobanov A.V."/>
            <person name="Lohr M."/>
            <person name="Manuell A."/>
            <person name="Meier I."/>
            <person name="Mets L."/>
            <person name="Mittag M."/>
            <person name="Mittelmeier T."/>
            <person name="Moroney J.V."/>
            <person name="Moseley J."/>
            <person name="Napoli C."/>
            <person name="Nedelcu A.M."/>
            <person name="Niyogi K."/>
            <person name="Novoselov S.V."/>
            <person name="Paulsen I.T."/>
            <person name="Pazour G.J."/>
            <person name="Purton S."/>
            <person name="Ral J.P."/>
            <person name="Riano-Pachon D.M."/>
            <person name="Riekhof W."/>
            <person name="Rymarquis L."/>
            <person name="Schroda M."/>
            <person name="Stern D."/>
            <person name="Umen J."/>
            <person name="Willows R."/>
            <person name="Wilson N."/>
            <person name="Zimmer S.L."/>
            <person name="Allmer J."/>
            <person name="Balk J."/>
            <person name="Bisova K."/>
            <person name="Chen C.J."/>
            <person name="Elias M."/>
            <person name="Gendler K."/>
            <person name="Hauser C."/>
            <person name="Lamb M.R."/>
            <person name="Ledford H."/>
            <person name="Long J.C."/>
            <person name="Minagawa J."/>
            <person name="Page M.D."/>
            <person name="Pan J."/>
            <person name="Pootakham W."/>
            <person name="Roje S."/>
            <person name="Rose A."/>
            <person name="Stahlberg E."/>
            <person name="Terauchi A.M."/>
            <person name="Yang P."/>
            <person name="Ball S."/>
            <person name="Bowler C."/>
            <person name="Dieckmann C.L."/>
            <person name="Gladyshev V.N."/>
            <person name="Green P."/>
            <person name="Jorgensen R."/>
            <person name="Mayfield S."/>
            <person name="Mueller-Roeber B."/>
            <person name="Rajamani S."/>
            <person name="Sayre R.T."/>
            <person name="Brokstein P."/>
            <person name="Dubchak I."/>
            <person name="Goodstein D."/>
            <person name="Hornick L."/>
            <person name="Huang Y.W."/>
            <person name="Jhaveri J."/>
            <person name="Luo Y."/>
            <person name="Martinez D."/>
            <person name="Ngau W.C."/>
            <person name="Otillar B."/>
            <person name="Poliakov A."/>
            <person name="Porter A."/>
            <person name="Szajkowski L."/>
            <person name="Werner G."/>
            <person name="Zhou K."/>
            <person name="Grigoriev I.V."/>
            <person name="Rokhsar D.S."/>
            <person name="Grossman A.R."/>
        </authorList>
    </citation>
    <scope>NUCLEOTIDE SEQUENCE [LARGE SCALE GENOMIC DNA]</scope>
    <source>
        <strain>CC-503</strain>
    </source>
</reference>
<reference key="2">
    <citation type="journal article" date="2017" name="Curr. Biol.">
        <title>Identification of chlamydomonas central core centriolar proteins reveals a role for human WDR90 in ciliogenesis.</title>
        <authorList>
            <person name="Hamel V."/>
            <person name="Steib E."/>
            <person name="Hamelin R."/>
            <person name="Armand F."/>
            <person name="Borgers S."/>
            <person name="Flueckiger I."/>
            <person name="Busso C."/>
            <person name="Olieric N."/>
            <person name="Sorzano C.O.S."/>
            <person name="Steinmetz M.O."/>
            <person name="Guichard P."/>
            <person name="Goenczy P."/>
        </authorList>
    </citation>
    <scope>IDENTIFICATION BY MASS SPECTROMETRY</scope>
    <scope>SUBCELLULAR LOCATION</scope>
</reference>
<comment type="subcellular location">
    <subcellularLocation>
        <location evidence="3">Cytoplasm</location>
        <location evidence="3">Cytoskeleton</location>
        <location evidence="3">Microtubule organizing center</location>
        <location evidence="3">Centrosome</location>
        <location evidence="3">Centriole</location>
    </subcellularLocation>
</comment>
<sequence>MVVLSAFPVNASPLLDTGDFADCRIVFVDANAPADDVNASSALQLPASSPAKAPANPGRSAPPSPGPRLATGVARNILSPKPKIWLGQFPQPATSRTGAGVEAPSRPAGPQPLLVVPGHRVVLAAASPLFRQQLATQADAIIRLRDRTSLPAAQQLLLAHVYGRPLDWPALTPTTLAQLLVLSADHALPALQQAAAARLLHLLAAKRPVGGPGPAVAAAAAGVNTPLQRPPCGPSPLEGGAGTALPAPPPAAAAPPAGAAAVVCTALQEVHSVYVEAIAAVVGLPTDVAGAGACVGLAAAARVLLLDALQDFEAAWQVPSLRRAFLGLPLPAALEVLASPALAVSCEGVVALAALAYEATRTQRAVEAAAAAAGEAGAADGGGGGGVGDGGGVLRPLDTCEQLALYGCVRWHLLHIDGRTHEWNSFLKNAVQRAPHLQRLLEHGTAASGTGGAVAAATGGVGLAPHAAAVPELAAAAAACGPYAAAASLLDLSQLTQSLLYTRQMRAEGGTGAAAHLPYMARRAGPRPRPTGHLQTAVHLQMDVPYVVLREAVARVQARMEQQERQRRLLERQQQQQQQHTKGGGGGGGVPAATAAALPLAVAPVAAVAVEEDLVGSELVFHAGYWWQMVVSLGPLCRYRMALAGPSAAAPPASGSAAVARNTPSALAAAAAAVAHDTDTRLVCFVGVRPLLLLTEAEVEAAAGRGVPSGWAGEGGCGGEGEGGEADGVAAVAAGAAVAARLLPSTVYVEQFEVWNERDLPQGRAALGPTAFARAGGFKGTLTLFALGAAALTSEAYWAKAVSGPEGALRVRARVAGVH</sequence>
<protein>
    <recommendedName>
        <fullName evidence="4">Proteome of basal body protein 15</fullName>
    </recommendedName>
</protein>
<evidence type="ECO:0000255" key="1"/>
<evidence type="ECO:0000256" key="2">
    <source>
        <dbReference type="SAM" id="MobiDB-lite"/>
    </source>
</evidence>
<evidence type="ECO:0000269" key="3">
    <source>
    </source>
</evidence>
<evidence type="ECO:0000303" key="4">
    <source>
    </source>
</evidence>
<accession>A0A2K3DDJ2</accession>
<dbReference type="EMBL" id="CM008970">
    <property type="protein sequence ID" value="PNW78601.1"/>
    <property type="molecule type" value="Genomic_DNA"/>
</dbReference>
<dbReference type="STRING" id="3055.A0A2K3DDJ2"/>
<dbReference type="EnsemblPlants" id="PNW78601">
    <property type="protein sequence ID" value="PNW78601"/>
    <property type="gene ID" value="CHLRE_09g390450v5"/>
</dbReference>
<dbReference type="Gramene" id="PNW78601">
    <property type="protein sequence ID" value="PNW78601"/>
    <property type="gene ID" value="CHLRE_09g390450v5"/>
</dbReference>
<dbReference type="InParanoid" id="A0A2K3DDJ2"/>
<dbReference type="OrthoDB" id="545000at2759"/>
<dbReference type="Proteomes" id="UP000006906">
    <property type="component" value="Chromosome 9"/>
</dbReference>
<dbReference type="GO" id="GO:0005814">
    <property type="term" value="C:centriole"/>
    <property type="evidence" value="ECO:0007669"/>
    <property type="project" value="UniProtKB-SubCell"/>
</dbReference>
<dbReference type="GO" id="GO:0005737">
    <property type="term" value="C:cytoplasm"/>
    <property type="evidence" value="ECO:0007669"/>
    <property type="project" value="UniProtKB-KW"/>
</dbReference>
<dbReference type="CDD" id="cd18186">
    <property type="entry name" value="BTB_POZ_ZBTB_KLHL-like"/>
    <property type="match status" value="1"/>
</dbReference>
<dbReference type="Gene3D" id="3.30.710.10">
    <property type="entry name" value="Potassium Channel Kv1.1, Chain A"/>
    <property type="match status" value="1"/>
</dbReference>
<dbReference type="InterPro" id="IPR011333">
    <property type="entry name" value="SKP1/BTB/POZ_sf"/>
</dbReference>
<gene>
    <name evidence="4" type="primary">POB15</name>
    <name type="ORF">CHLRE_09g390450v5</name>
</gene>
<proteinExistence type="evidence at protein level"/>
<organism>
    <name type="scientific">Chlamydomonas reinhardtii</name>
    <name type="common">Chlamydomonas smithii</name>
    <dbReference type="NCBI Taxonomy" id="3055"/>
    <lineage>
        <taxon>Eukaryota</taxon>
        <taxon>Viridiplantae</taxon>
        <taxon>Chlorophyta</taxon>
        <taxon>core chlorophytes</taxon>
        <taxon>Chlorophyceae</taxon>
        <taxon>CS clade</taxon>
        <taxon>Chlamydomonadales</taxon>
        <taxon>Chlamydomonadaceae</taxon>
        <taxon>Chlamydomonas</taxon>
    </lineage>
</organism>
<feature type="chain" id="PRO_0000445433" description="Proteome of basal body protein 15">
    <location>
        <begin position="1"/>
        <end position="819"/>
    </location>
</feature>
<feature type="region of interest" description="Disordered" evidence="2">
    <location>
        <begin position="46"/>
        <end position="72"/>
    </location>
</feature>
<feature type="region of interest" description="Disordered" evidence="2">
    <location>
        <begin position="564"/>
        <end position="590"/>
    </location>
</feature>
<feature type="coiled-coil region" evidence="1">
    <location>
        <begin position="546"/>
        <end position="580"/>
    </location>
</feature>
<feature type="compositionally biased region" description="Low complexity" evidence="2">
    <location>
        <begin position="46"/>
        <end position="59"/>
    </location>
</feature>
<feature type="compositionally biased region" description="Low complexity" evidence="2">
    <location>
        <begin position="572"/>
        <end position="581"/>
    </location>
</feature>